<reference key="1">
    <citation type="submission" date="2005-09" db="EMBL/GenBank/DDBJ databases">
        <title>The chloroplast genome of mulberry: structural features and comparative analysis.</title>
        <authorList>
            <person name="Ravi V."/>
            <person name="Khurana J.P."/>
            <person name="Tyagi A.K."/>
            <person name="Khurana P."/>
        </authorList>
    </citation>
    <scope>NUCLEOTIDE SEQUENCE [LARGE SCALE GENOMIC DNA]</scope>
    <source>
        <strain>cv. K2</strain>
    </source>
</reference>
<geneLocation type="chloroplast"/>
<gene>
    <name evidence="1" type="primary">clpP</name>
    <name type="ordered locus">MoinCp046</name>
</gene>
<sequence length="196" mass="21943">MPIGVPKVPFRSPGDEDASWVDVINRLYRERLLFLGQEVDSEISNQLIGLMVFLSIEDDTKDLYLFINSPGGWVIPGLGIYDTMQFVQPDVQTICMGLAASMGSFILVGGEITKRLAFPHARVMIHQPASSFYEAQTGEFILEAEELLKLRETITRVYVQRTGKSLWVISEDMERDVFMSATEAQAHGLVDLVAVE</sequence>
<protein>
    <recommendedName>
        <fullName evidence="1">ATP-dependent Clp protease proteolytic subunit</fullName>
        <ecNumber evidence="1">3.4.21.92</ecNumber>
    </recommendedName>
    <alternativeName>
        <fullName evidence="1">Endopeptidase Clp</fullName>
    </alternativeName>
</protein>
<proteinExistence type="inferred from homology"/>
<feature type="chain" id="PRO_0000275291" description="ATP-dependent Clp protease proteolytic subunit">
    <location>
        <begin position="1"/>
        <end position="196"/>
    </location>
</feature>
<feature type="active site" description="Nucleophile" evidence="1">
    <location>
        <position position="101"/>
    </location>
</feature>
<feature type="active site" evidence="1">
    <location>
        <position position="126"/>
    </location>
</feature>
<name>CLPP_MORIN</name>
<accession>Q09WZ2</accession>
<comment type="function">
    <text evidence="1">Cleaves peptides in various proteins in a process that requires ATP hydrolysis. Has a chymotrypsin-like activity. Plays a major role in the degradation of misfolded proteins.</text>
</comment>
<comment type="catalytic activity">
    <reaction evidence="1">
        <text>Hydrolysis of proteins to small peptides in the presence of ATP and magnesium. alpha-casein is the usual test substrate. In the absence of ATP, only oligopeptides shorter than five residues are hydrolyzed (such as succinyl-Leu-Tyr-|-NHMec, and Leu-Tyr-Leu-|-Tyr-Trp, in which cleavage of the -Tyr-|-Leu- and -Tyr-|-Trp bonds also occurs).</text>
        <dbReference type="EC" id="3.4.21.92"/>
    </reaction>
</comment>
<comment type="subunit">
    <text>Component of the chloroplastic Clp protease core complex.</text>
</comment>
<comment type="subcellular location">
    <subcellularLocation>
        <location evidence="1">Plastid</location>
        <location evidence="1">Chloroplast stroma</location>
    </subcellularLocation>
</comment>
<comment type="similarity">
    <text evidence="1">Belongs to the peptidase S14 family.</text>
</comment>
<organism>
    <name type="scientific">Morus indica</name>
    <name type="common">Mulberry</name>
    <dbReference type="NCBI Taxonomy" id="248361"/>
    <lineage>
        <taxon>Eukaryota</taxon>
        <taxon>Viridiplantae</taxon>
        <taxon>Streptophyta</taxon>
        <taxon>Embryophyta</taxon>
        <taxon>Tracheophyta</taxon>
        <taxon>Spermatophyta</taxon>
        <taxon>Magnoliopsida</taxon>
        <taxon>eudicotyledons</taxon>
        <taxon>Gunneridae</taxon>
        <taxon>Pentapetalae</taxon>
        <taxon>rosids</taxon>
        <taxon>fabids</taxon>
        <taxon>Rosales</taxon>
        <taxon>Moraceae</taxon>
        <taxon>Moreae</taxon>
        <taxon>Morus</taxon>
    </lineage>
</organism>
<dbReference type="EC" id="3.4.21.92" evidence="1"/>
<dbReference type="EMBL" id="DQ226511">
    <property type="protein sequence ID" value="ABB20982.1"/>
    <property type="molecule type" value="Genomic_DNA"/>
</dbReference>
<dbReference type="RefSeq" id="YP_762286.1">
    <property type="nucleotide sequence ID" value="NC_008359.1"/>
</dbReference>
<dbReference type="SMR" id="Q09WZ2"/>
<dbReference type="MEROPS" id="S14.002"/>
<dbReference type="GeneID" id="4290645"/>
<dbReference type="GO" id="GO:0009570">
    <property type="term" value="C:chloroplast stroma"/>
    <property type="evidence" value="ECO:0007669"/>
    <property type="project" value="UniProtKB-SubCell"/>
</dbReference>
<dbReference type="GO" id="GO:0009368">
    <property type="term" value="C:endopeptidase Clp complex"/>
    <property type="evidence" value="ECO:0007669"/>
    <property type="project" value="TreeGrafter"/>
</dbReference>
<dbReference type="GO" id="GO:0004176">
    <property type="term" value="F:ATP-dependent peptidase activity"/>
    <property type="evidence" value="ECO:0007669"/>
    <property type="project" value="InterPro"/>
</dbReference>
<dbReference type="GO" id="GO:0051117">
    <property type="term" value="F:ATPase binding"/>
    <property type="evidence" value="ECO:0007669"/>
    <property type="project" value="TreeGrafter"/>
</dbReference>
<dbReference type="GO" id="GO:0004252">
    <property type="term" value="F:serine-type endopeptidase activity"/>
    <property type="evidence" value="ECO:0007669"/>
    <property type="project" value="UniProtKB-UniRule"/>
</dbReference>
<dbReference type="GO" id="GO:0006515">
    <property type="term" value="P:protein quality control for misfolded or incompletely synthesized proteins"/>
    <property type="evidence" value="ECO:0007669"/>
    <property type="project" value="TreeGrafter"/>
</dbReference>
<dbReference type="CDD" id="cd07017">
    <property type="entry name" value="S14_ClpP_2"/>
    <property type="match status" value="1"/>
</dbReference>
<dbReference type="FunFam" id="3.90.226.10:FF:000006">
    <property type="entry name" value="ATP-dependent Clp protease proteolytic subunit"/>
    <property type="match status" value="1"/>
</dbReference>
<dbReference type="Gene3D" id="3.90.226.10">
    <property type="entry name" value="2-enoyl-CoA Hydratase, Chain A, domain 1"/>
    <property type="match status" value="1"/>
</dbReference>
<dbReference type="HAMAP" id="MF_00444">
    <property type="entry name" value="ClpP"/>
    <property type="match status" value="1"/>
</dbReference>
<dbReference type="InterPro" id="IPR001907">
    <property type="entry name" value="ClpP"/>
</dbReference>
<dbReference type="InterPro" id="IPR029045">
    <property type="entry name" value="ClpP/crotonase-like_dom_sf"/>
</dbReference>
<dbReference type="InterPro" id="IPR023562">
    <property type="entry name" value="ClpP/TepA"/>
</dbReference>
<dbReference type="InterPro" id="IPR033135">
    <property type="entry name" value="ClpP_His_AS"/>
</dbReference>
<dbReference type="InterPro" id="IPR018215">
    <property type="entry name" value="ClpP_Ser_AS"/>
</dbReference>
<dbReference type="PANTHER" id="PTHR10381">
    <property type="entry name" value="ATP-DEPENDENT CLP PROTEASE PROTEOLYTIC SUBUNIT"/>
    <property type="match status" value="1"/>
</dbReference>
<dbReference type="PANTHER" id="PTHR10381:SF15">
    <property type="entry name" value="CHLOROPLASTIC ATP-DEPENDENT CLP PROTEASE PROTEOLYTIC SUBUNIT 1"/>
    <property type="match status" value="1"/>
</dbReference>
<dbReference type="Pfam" id="PF00574">
    <property type="entry name" value="CLP_protease"/>
    <property type="match status" value="1"/>
</dbReference>
<dbReference type="PRINTS" id="PR00127">
    <property type="entry name" value="CLPPROTEASEP"/>
</dbReference>
<dbReference type="SUPFAM" id="SSF52096">
    <property type="entry name" value="ClpP/crotonase"/>
    <property type="match status" value="1"/>
</dbReference>
<dbReference type="PROSITE" id="PS00382">
    <property type="entry name" value="CLP_PROTEASE_HIS"/>
    <property type="match status" value="1"/>
</dbReference>
<dbReference type="PROSITE" id="PS00381">
    <property type="entry name" value="CLP_PROTEASE_SER"/>
    <property type="match status" value="1"/>
</dbReference>
<keyword id="KW-0150">Chloroplast</keyword>
<keyword id="KW-0378">Hydrolase</keyword>
<keyword id="KW-0934">Plastid</keyword>
<keyword id="KW-0645">Protease</keyword>
<keyword id="KW-0720">Serine protease</keyword>
<evidence type="ECO:0000255" key="1">
    <source>
        <dbReference type="HAMAP-Rule" id="MF_00444"/>
    </source>
</evidence>